<evidence type="ECO:0000255" key="1">
    <source>
        <dbReference type="HAMAP-Rule" id="MF_01382"/>
    </source>
</evidence>
<evidence type="ECO:0000256" key="2">
    <source>
        <dbReference type="SAM" id="MobiDB-lite"/>
    </source>
</evidence>
<reference key="1">
    <citation type="journal article" date="2003" name="Proc. Natl. Acad. Sci. U.S.A.">
        <title>The complete genome sequence of Chromobacterium violaceum reveals remarkable and exploitable bacterial adaptability.</title>
        <authorList>
            <person name="Vasconcelos A.T.R."/>
            <person name="de Almeida D.F."/>
            <person name="Hungria M."/>
            <person name="Guimaraes C.T."/>
            <person name="Antonio R.V."/>
            <person name="Almeida F.C."/>
            <person name="de Almeida L.G.P."/>
            <person name="de Almeida R."/>
            <person name="Alves-Gomes J.A."/>
            <person name="Andrade E.M."/>
            <person name="Araripe J."/>
            <person name="de Araujo M.F.F."/>
            <person name="Astolfi-Filho S."/>
            <person name="Azevedo V."/>
            <person name="Baptista A.J."/>
            <person name="Bataus L.A.M."/>
            <person name="Batista J.S."/>
            <person name="Belo A."/>
            <person name="van den Berg C."/>
            <person name="Bogo M."/>
            <person name="Bonatto S."/>
            <person name="Bordignon J."/>
            <person name="Brigido M.M."/>
            <person name="Brito C.A."/>
            <person name="Brocchi M."/>
            <person name="Burity H.A."/>
            <person name="Camargo A.A."/>
            <person name="Cardoso D.D.P."/>
            <person name="Carneiro N.P."/>
            <person name="Carraro D.M."/>
            <person name="Carvalho C.M.B."/>
            <person name="Cascardo J.C.M."/>
            <person name="Cavada B.S."/>
            <person name="Chueire L.M.O."/>
            <person name="Creczynski-Pasa T.B."/>
            <person name="Cunha-Junior N.C."/>
            <person name="Fagundes N."/>
            <person name="Falcao C.L."/>
            <person name="Fantinatti F."/>
            <person name="Farias I.P."/>
            <person name="Felipe M.S.S."/>
            <person name="Ferrari L.P."/>
            <person name="Ferro J.A."/>
            <person name="Ferro M.I.T."/>
            <person name="Franco G.R."/>
            <person name="Freitas N.S.A."/>
            <person name="Furlan L.R."/>
            <person name="Gazzinelli R.T."/>
            <person name="Gomes E.A."/>
            <person name="Goncalves P.R."/>
            <person name="Grangeiro T.B."/>
            <person name="Grattapaglia D."/>
            <person name="Grisard E.C."/>
            <person name="Hanna E.S."/>
            <person name="Jardim S.N."/>
            <person name="Laurino J."/>
            <person name="Leoi L.C.T."/>
            <person name="Lima L.F.A."/>
            <person name="Loureiro M.F."/>
            <person name="Lyra M.C.C.P."/>
            <person name="Madeira H.M.F."/>
            <person name="Manfio G.P."/>
            <person name="Maranhao A.Q."/>
            <person name="Martins W.S."/>
            <person name="di Mauro S.M.Z."/>
            <person name="de Medeiros S.R.B."/>
            <person name="Meissner R.V."/>
            <person name="Moreira M.A.M."/>
            <person name="Nascimento F.F."/>
            <person name="Nicolas M.F."/>
            <person name="Oliveira J.G."/>
            <person name="Oliveira S.C."/>
            <person name="Paixao R.F.C."/>
            <person name="Parente J.A."/>
            <person name="Pedrosa F.O."/>
            <person name="Pena S.D.J."/>
            <person name="Pereira J.O."/>
            <person name="Pereira M."/>
            <person name="Pinto L.S.R.C."/>
            <person name="Pinto L.S."/>
            <person name="Porto J.I.R."/>
            <person name="Potrich D.P."/>
            <person name="Ramalho-Neto C.E."/>
            <person name="Reis A.M.M."/>
            <person name="Rigo L.U."/>
            <person name="Rondinelli E."/>
            <person name="Santos E.B.P."/>
            <person name="Santos F.R."/>
            <person name="Schneider M.P.C."/>
            <person name="Seuanez H.N."/>
            <person name="Silva A.M.R."/>
            <person name="da Silva A.L.C."/>
            <person name="Silva D.W."/>
            <person name="Silva R."/>
            <person name="Simoes I.C."/>
            <person name="Simon D."/>
            <person name="Soares C.M.A."/>
            <person name="Soares R.B.A."/>
            <person name="Souza E.M."/>
            <person name="Souza K.R.L."/>
            <person name="Souza R.C."/>
            <person name="Steffens M.B.R."/>
            <person name="Steindel M."/>
            <person name="Teixeira S.R."/>
            <person name="Urmenyi T."/>
            <person name="Vettore A."/>
            <person name="Wassem R."/>
            <person name="Zaha A."/>
            <person name="Simpson A.J.G."/>
        </authorList>
    </citation>
    <scope>NUCLEOTIDE SEQUENCE [LARGE SCALE GENOMIC DNA]</scope>
    <source>
        <strain>ATCC 12472 / DSM 30191 / JCM 1249 / CCUG 213 / NBRC 12614 / NCIMB 9131 / NCTC 9757 / MK</strain>
    </source>
</reference>
<proteinExistence type="inferred from homology"/>
<name>SECA_CHRVO</name>
<gene>
    <name evidence="1" type="primary">secA</name>
    <name type="ordered locus">CV_4281</name>
</gene>
<sequence>MISSLLKKVFGSRNDRLLKQYRQTVARINALEPAMQALSDEALAAKTQEFRDRLGKGEKLDDLLPEAFAVCREASRRVLGMRHFDVQLIGGMSLHQGKIAEMRTGEGKTLVGTLPVYLNALSGDGVHVVTVNDYLASRDAGIMAPLYNFLGLSVGVNLSQMAHDDKQAAYACDITYGTNNEFGFDYLRDNMVFSVDEKVQRKLAFAVVDEVDSILIDEARTPLIISGPADDNIDMYQRMNAVPPLLKRQETEEGEGDYWVDEKAHSVLLSEAGHEHSEEILTRLGLLKEGDSLYSATNITLMHHLMAALRAYSLFHKDQHYVVQDGEVVIVDEFTGRLMAGRRWSDGLHQAVEAKEGVEINRENQTLASITFQNYFRLYGKLSGMTGTADTEAYEFQSIYNLETVVIPTNKPMIRKDSQDKVYRSAKEKYDAILADIKDCHERGQPVLVGTTSIENSELVANLLSQAKLPHNVLNAKEHAREADIVVQAGRPGMITVATNMAGRGTDIVLGGNPEPEIKAVRADDSLSDADKNARIEAIRAEWKQRHAAVLEAGGLHIVGTERHESRRIDNQLRGRSGRQGDPGSSRFYLCLEDPLLRIFASDRVAAIMDRLKMPEGEAIEHPWVTRSIENAQRKVEGRNFDIRKQLLEYDDVANDQRKVIYQQRNEILVEEDVSDVVINMREGVISDLVDLHLPPESLEEQWDLAGLEKTLASDFLLEVPVAEWIKAEPNLDIEQIRQRIVDMAAAAYQAKVDQAGDGVMRQFERSLVLQMLDNHWREHLAAMDHLRQGIHLRGYAQKNPKQEYKREAFELFADMLERIKRSVVQVLMTVQIRGQEDVDAVEPHALPDFEMQHAEPGSALGDDEDNPLSPEALASQGLRINRNDACPCGSGKKYKQCHGRLA</sequence>
<comment type="function">
    <text evidence="1">Part of the Sec protein translocase complex. Interacts with the SecYEG preprotein conducting channel. Has a central role in coupling the hydrolysis of ATP to the transfer of proteins into and across the cell membrane, serving both as a receptor for the preprotein-SecB complex and as an ATP-driven molecular motor driving the stepwise translocation of polypeptide chains across the membrane.</text>
</comment>
<comment type="catalytic activity">
    <reaction evidence="1">
        <text>ATP + H2O + cellular proteinSide 1 = ADP + phosphate + cellular proteinSide 2.</text>
        <dbReference type="EC" id="7.4.2.8"/>
    </reaction>
</comment>
<comment type="cofactor">
    <cofactor evidence="1">
        <name>Zn(2+)</name>
        <dbReference type="ChEBI" id="CHEBI:29105"/>
    </cofactor>
    <text evidence="1">May bind 1 zinc ion per subunit.</text>
</comment>
<comment type="subunit">
    <text evidence="1">Monomer and homodimer. Part of the essential Sec protein translocation apparatus which comprises SecA, SecYEG and auxiliary proteins SecDF-YajC and YidC.</text>
</comment>
<comment type="subcellular location">
    <subcellularLocation>
        <location evidence="1">Cell inner membrane</location>
        <topology evidence="1">Peripheral membrane protein</topology>
        <orientation evidence="1">Cytoplasmic side</orientation>
    </subcellularLocation>
    <subcellularLocation>
        <location evidence="1">Cytoplasm</location>
    </subcellularLocation>
    <text evidence="1">Distribution is 50-50.</text>
</comment>
<comment type="similarity">
    <text evidence="1">Belongs to the SecA family.</text>
</comment>
<protein>
    <recommendedName>
        <fullName evidence="1">Protein translocase subunit SecA</fullName>
        <ecNumber evidence="1">7.4.2.8</ecNumber>
    </recommendedName>
</protein>
<accession>Q7NQ59</accession>
<organism>
    <name type="scientific">Chromobacterium violaceum (strain ATCC 12472 / DSM 30191 / JCM 1249 / CCUG 213 / NBRC 12614 / NCIMB 9131 / NCTC 9757 / MK)</name>
    <dbReference type="NCBI Taxonomy" id="243365"/>
    <lineage>
        <taxon>Bacteria</taxon>
        <taxon>Pseudomonadati</taxon>
        <taxon>Pseudomonadota</taxon>
        <taxon>Betaproteobacteria</taxon>
        <taxon>Neisseriales</taxon>
        <taxon>Chromobacteriaceae</taxon>
        <taxon>Chromobacterium</taxon>
    </lineage>
</organism>
<keyword id="KW-0067">ATP-binding</keyword>
<keyword id="KW-0997">Cell inner membrane</keyword>
<keyword id="KW-1003">Cell membrane</keyword>
<keyword id="KW-0963">Cytoplasm</keyword>
<keyword id="KW-0472">Membrane</keyword>
<keyword id="KW-0479">Metal-binding</keyword>
<keyword id="KW-0547">Nucleotide-binding</keyword>
<keyword id="KW-0653">Protein transport</keyword>
<keyword id="KW-1185">Reference proteome</keyword>
<keyword id="KW-1278">Translocase</keyword>
<keyword id="KW-0811">Translocation</keyword>
<keyword id="KW-0813">Transport</keyword>
<keyword id="KW-0862">Zinc</keyword>
<dbReference type="EC" id="7.4.2.8" evidence="1"/>
<dbReference type="EMBL" id="AE016825">
    <property type="protein sequence ID" value="AAQ61941.2"/>
    <property type="molecule type" value="Genomic_DNA"/>
</dbReference>
<dbReference type="RefSeq" id="WP_011137827.1">
    <property type="nucleotide sequence ID" value="NC_005085.1"/>
</dbReference>
<dbReference type="SMR" id="Q7NQ59"/>
<dbReference type="STRING" id="243365.CV_4281"/>
<dbReference type="KEGG" id="cvi:CV_4281"/>
<dbReference type="eggNOG" id="COG0653">
    <property type="taxonomic scope" value="Bacteria"/>
</dbReference>
<dbReference type="HOGENOM" id="CLU_005314_3_0_4"/>
<dbReference type="OrthoDB" id="9805579at2"/>
<dbReference type="Proteomes" id="UP000001424">
    <property type="component" value="Chromosome"/>
</dbReference>
<dbReference type="GO" id="GO:0031522">
    <property type="term" value="C:cell envelope Sec protein transport complex"/>
    <property type="evidence" value="ECO:0007669"/>
    <property type="project" value="TreeGrafter"/>
</dbReference>
<dbReference type="GO" id="GO:0005829">
    <property type="term" value="C:cytosol"/>
    <property type="evidence" value="ECO:0007669"/>
    <property type="project" value="TreeGrafter"/>
</dbReference>
<dbReference type="GO" id="GO:0005886">
    <property type="term" value="C:plasma membrane"/>
    <property type="evidence" value="ECO:0007669"/>
    <property type="project" value="UniProtKB-SubCell"/>
</dbReference>
<dbReference type="GO" id="GO:0005524">
    <property type="term" value="F:ATP binding"/>
    <property type="evidence" value="ECO:0007669"/>
    <property type="project" value="UniProtKB-UniRule"/>
</dbReference>
<dbReference type="GO" id="GO:0046872">
    <property type="term" value="F:metal ion binding"/>
    <property type="evidence" value="ECO:0007669"/>
    <property type="project" value="UniProtKB-KW"/>
</dbReference>
<dbReference type="GO" id="GO:0008564">
    <property type="term" value="F:protein-exporting ATPase activity"/>
    <property type="evidence" value="ECO:0007669"/>
    <property type="project" value="UniProtKB-EC"/>
</dbReference>
<dbReference type="GO" id="GO:0065002">
    <property type="term" value="P:intracellular protein transmembrane transport"/>
    <property type="evidence" value="ECO:0007669"/>
    <property type="project" value="UniProtKB-UniRule"/>
</dbReference>
<dbReference type="GO" id="GO:0017038">
    <property type="term" value="P:protein import"/>
    <property type="evidence" value="ECO:0007669"/>
    <property type="project" value="InterPro"/>
</dbReference>
<dbReference type="GO" id="GO:0006605">
    <property type="term" value="P:protein targeting"/>
    <property type="evidence" value="ECO:0007669"/>
    <property type="project" value="UniProtKB-UniRule"/>
</dbReference>
<dbReference type="GO" id="GO:0043952">
    <property type="term" value="P:protein transport by the Sec complex"/>
    <property type="evidence" value="ECO:0007669"/>
    <property type="project" value="TreeGrafter"/>
</dbReference>
<dbReference type="CDD" id="cd17928">
    <property type="entry name" value="DEXDc_SecA"/>
    <property type="match status" value="1"/>
</dbReference>
<dbReference type="CDD" id="cd18803">
    <property type="entry name" value="SF2_C_secA"/>
    <property type="match status" value="1"/>
</dbReference>
<dbReference type="FunFam" id="3.40.50.300:FF:000113">
    <property type="entry name" value="Preprotein translocase subunit SecA"/>
    <property type="match status" value="1"/>
</dbReference>
<dbReference type="FunFam" id="3.90.1440.10:FF:000001">
    <property type="entry name" value="Preprotein translocase subunit SecA"/>
    <property type="match status" value="1"/>
</dbReference>
<dbReference type="FunFam" id="1.10.3060.10:FF:000003">
    <property type="entry name" value="Protein translocase subunit SecA"/>
    <property type="match status" value="1"/>
</dbReference>
<dbReference type="FunFam" id="3.40.50.300:FF:000334">
    <property type="entry name" value="Protein translocase subunit SecA"/>
    <property type="match status" value="1"/>
</dbReference>
<dbReference type="Gene3D" id="1.10.3060.10">
    <property type="entry name" value="Helical scaffold and wing domains of SecA"/>
    <property type="match status" value="1"/>
</dbReference>
<dbReference type="Gene3D" id="3.40.50.300">
    <property type="entry name" value="P-loop containing nucleotide triphosphate hydrolases"/>
    <property type="match status" value="2"/>
</dbReference>
<dbReference type="Gene3D" id="3.90.1440.10">
    <property type="entry name" value="SecA, preprotein cross-linking domain"/>
    <property type="match status" value="1"/>
</dbReference>
<dbReference type="HAMAP" id="MF_01382">
    <property type="entry name" value="SecA"/>
    <property type="match status" value="1"/>
</dbReference>
<dbReference type="InterPro" id="IPR014001">
    <property type="entry name" value="Helicase_ATP-bd"/>
</dbReference>
<dbReference type="InterPro" id="IPR027417">
    <property type="entry name" value="P-loop_NTPase"/>
</dbReference>
<dbReference type="InterPro" id="IPR004027">
    <property type="entry name" value="SEC_C_motif"/>
</dbReference>
<dbReference type="InterPro" id="IPR000185">
    <property type="entry name" value="SecA"/>
</dbReference>
<dbReference type="InterPro" id="IPR020937">
    <property type="entry name" value="SecA_CS"/>
</dbReference>
<dbReference type="InterPro" id="IPR011115">
    <property type="entry name" value="SecA_DEAD"/>
</dbReference>
<dbReference type="InterPro" id="IPR014018">
    <property type="entry name" value="SecA_motor_DEAD"/>
</dbReference>
<dbReference type="InterPro" id="IPR011130">
    <property type="entry name" value="SecA_preprotein_X-link_dom"/>
</dbReference>
<dbReference type="InterPro" id="IPR044722">
    <property type="entry name" value="SecA_SF2_C"/>
</dbReference>
<dbReference type="InterPro" id="IPR011116">
    <property type="entry name" value="SecA_Wing/Scaffold"/>
</dbReference>
<dbReference type="InterPro" id="IPR036266">
    <property type="entry name" value="SecA_Wing/Scaffold_sf"/>
</dbReference>
<dbReference type="InterPro" id="IPR036670">
    <property type="entry name" value="SecA_X-link_sf"/>
</dbReference>
<dbReference type="NCBIfam" id="NF009538">
    <property type="entry name" value="PRK12904.1"/>
    <property type="match status" value="1"/>
</dbReference>
<dbReference type="NCBIfam" id="TIGR00963">
    <property type="entry name" value="secA"/>
    <property type="match status" value="1"/>
</dbReference>
<dbReference type="PANTHER" id="PTHR30612:SF0">
    <property type="entry name" value="CHLOROPLAST PROTEIN-TRANSPORTING ATPASE"/>
    <property type="match status" value="1"/>
</dbReference>
<dbReference type="PANTHER" id="PTHR30612">
    <property type="entry name" value="SECA INNER MEMBRANE COMPONENT OF SEC PROTEIN SECRETION SYSTEM"/>
    <property type="match status" value="1"/>
</dbReference>
<dbReference type="Pfam" id="PF21090">
    <property type="entry name" value="P-loop_SecA"/>
    <property type="match status" value="1"/>
</dbReference>
<dbReference type="Pfam" id="PF02810">
    <property type="entry name" value="SEC-C"/>
    <property type="match status" value="1"/>
</dbReference>
<dbReference type="Pfam" id="PF07517">
    <property type="entry name" value="SecA_DEAD"/>
    <property type="match status" value="1"/>
</dbReference>
<dbReference type="Pfam" id="PF01043">
    <property type="entry name" value="SecA_PP_bind"/>
    <property type="match status" value="1"/>
</dbReference>
<dbReference type="Pfam" id="PF07516">
    <property type="entry name" value="SecA_SW"/>
    <property type="match status" value="1"/>
</dbReference>
<dbReference type="PRINTS" id="PR00906">
    <property type="entry name" value="SECA"/>
</dbReference>
<dbReference type="SMART" id="SM00957">
    <property type="entry name" value="SecA_DEAD"/>
    <property type="match status" value="1"/>
</dbReference>
<dbReference type="SMART" id="SM00958">
    <property type="entry name" value="SecA_PP_bind"/>
    <property type="match status" value="1"/>
</dbReference>
<dbReference type="SUPFAM" id="SSF81886">
    <property type="entry name" value="Helical scaffold and wing domains of SecA"/>
    <property type="match status" value="1"/>
</dbReference>
<dbReference type="SUPFAM" id="SSF52540">
    <property type="entry name" value="P-loop containing nucleoside triphosphate hydrolases"/>
    <property type="match status" value="2"/>
</dbReference>
<dbReference type="SUPFAM" id="SSF81767">
    <property type="entry name" value="Pre-protein crosslinking domain of SecA"/>
    <property type="match status" value="1"/>
</dbReference>
<dbReference type="PROSITE" id="PS01312">
    <property type="entry name" value="SECA"/>
    <property type="match status" value="1"/>
</dbReference>
<dbReference type="PROSITE" id="PS51196">
    <property type="entry name" value="SECA_MOTOR_DEAD"/>
    <property type="match status" value="1"/>
</dbReference>
<feature type="chain" id="PRO_0000320773" description="Protein translocase subunit SecA">
    <location>
        <begin position="1"/>
        <end position="903"/>
    </location>
</feature>
<feature type="region of interest" description="Disordered" evidence="2">
    <location>
        <begin position="565"/>
        <end position="584"/>
    </location>
</feature>
<feature type="region of interest" description="Disordered" evidence="2">
    <location>
        <begin position="855"/>
        <end position="877"/>
    </location>
</feature>
<feature type="binding site" evidence="1">
    <location>
        <position position="87"/>
    </location>
    <ligand>
        <name>ATP</name>
        <dbReference type="ChEBI" id="CHEBI:30616"/>
    </ligand>
</feature>
<feature type="binding site" evidence="1">
    <location>
        <begin position="105"/>
        <end position="109"/>
    </location>
    <ligand>
        <name>ATP</name>
        <dbReference type="ChEBI" id="CHEBI:30616"/>
    </ligand>
</feature>
<feature type="binding site" evidence="1">
    <location>
        <position position="507"/>
    </location>
    <ligand>
        <name>ATP</name>
        <dbReference type="ChEBI" id="CHEBI:30616"/>
    </ligand>
</feature>
<feature type="binding site" evidence="1">
    <location>
        <position position="887"/>
    </location>
    <ligand>
        <name>Zn(2+)</name>
        <dbReference type="ChEBI" id="CHEBI:29105"/>
    </ligand>
</feature>
<feature type="binding site" evidence="1">
    <location>
        <position position="889"/>
    </location>
    <ligand>
        <name>Zn(2+)</name>
        <dbReference type="ChEBI" id="CHEBI:29105"/>
    </ligand>
</feature>
<feature type="binding site" evidence="1">
    <location>
        <position position="898"/>
    </location>
    <ligand>
        <name>Zn(2+)</name>
        <dbReference type="ChEBI" id="CHEBI:29105"/>
    </ligand>
</feature>
<feature type="binding site" evidence="1">
    <location>
        <position position="899"/>
    </location>
    <ligand>
        <name>Zn(2+)</name>
        <dbReference type="ChEBI" id="CHEBI:29105"/>
    </ligand>
</feature>